<keyword id="KW-0010">Activator</keyword>
<keyword id="KW-1069">Brassinosteroid biosynthesis</keyword>
<keyword id="KW-1070">Brassinosteroid signaling pathway</keyword>
<keyword id="KW-0175">Coiled coil</keyword>
<keyword id="KW-0238">DNA-binding</keyword>
<keyword id="KW-0444">Lipid biosynthesis</keyword>
<keyword id="KW-0443">Lipid metabolism</keyword>
<keyword id="KW-0539">Nucleus</keyword>
<keyword id="KW-1185">Reference proteome</keyword>
<keyword id="KW-0752">Steroid biosynthesis</keyword>
<keyword id="KW-0804">Transcription</keyword>
<keyword id="KW-0805">Transcription regulation</keyword>
<protein>
    <recommendedName>
        <fullName evidence="5">Myb family transcription factor RLI1</fullName>
    </recommendedName>
    <alternativeName>
        <fullName evidence="1">Protein HIGHLY INDUCED BY NITRATE GENE 1</fullName>
    </alternativeName>
    <alternativeName>
        <fullName evidence="1">Protein REGULATOR OF LEAF INCLINATION 1</fullName>
    </alternativeName>
</protein>
<accession>A2XYN9</accession>
<accession>Q01MN4</accession>
<organism>
    <name type="scientific">Oryza sativa subsp. indica</name>
    <name type="common">Rice</name>
    <dbReference type="NCBI Taxonomy" id="39946"/>
    <lineage>
        <taxon>Eukaryota</taxon>
        <taxon>Viridiplantae</taxon>
        <taxon>Streptophyta</taxon>
        <taxon>Embryophyta</taxon>
        <taxon>Tracheophyta</taxon>
        <taxon>Spermatophyta</taxon>
        <taxon>Magnoliopsida</taxon>
        <taxon>Liliopsida</taxon>
        <taxon>Poales</taxon>
        <taxon>Poaceae</taxon>
        <taxon>BOP clade</taxon>
        <taxon>Oryzoideae</taxon>
        <taxon>Oryzeae</taxon>
        <taxon>Oryzinae</taxon>
        <taxon>Oryza</taxon>
        <taxon>Oryza sativa</taxon>
    </lineage>
</organism>
<name>RLI1_ORYSI</name>
<proteinExistence type="inferred from homology"/>
<reference key="1">
    <citation type="journal article" date="2002" name="Nature">
        <title>Sequence and analysis of rice chromosome 4.</title>
        <authorList>
            <person name="Feng Q."/>
            <person name="Zhang Y."/>
            <person name="Hao P."/>
            <person name="Wang S."/>
            <person name="Fu G."/>
            <person name="Huang Y."/>
            <person name="Li Y."/>
            <person name="Zhu J."/>
            <person name="Liu Y."/>
            <person name="Hu X."/>
            <person name="Jia P."/>
            <person name="Zhang Y."/>
            <person name="Zhao Q."/>
            <person name="Ying K."/>
            <person name="Yu S."/>
            <person name="Tang Y."/>
            <person name="Weng Q."/>
            <person name="Zhang L."/>
            <person name="Lu Y."/>
            <person name="Mu J."/>
            <person name="Lu Y."/>
            <person name="Zhang L.S."/>
            <person name="Yu Z."/>
            <person name="Fan D."/>
            <person name="Liu X."/>
            <person name="Lu T."/>
            <person name="Li C."/>
            <person name="Wu Y."/>
            <person name="Sun T."/>
            <person name="Lei H."/>
            <person name="Li T."/>
            <person name="Hu H."/>
            <person name="Guan J."/>
            <person name="Wu M."/>
            <person name="Zhang R."/>
            <person name="Zhou B."/>
            <person name="Chen Z."/>
            <person name="Chen L."/>
            <person name="Jin Z."/>
            <person name="Wang R."/>
            <person name="Yin H."/>
            <person name="Cai Z."/>
            <person name="Ren S."/>
            <person name="Lv G."/>
            <person name="Gu W."/>
            <person name="Zhu G."/>
            <person name="Tu Y."/>
            <person name="Jia J."/>
            <person name="Zhang Y."/>
            <person name="Chen J."/>
            <person name="Kang H."/>
            <person name="Chen X."/>
            <person name="Shao C."/>
            <person name="Sun Y."/>
            <person name="Hu Q."/>
            <person name="Zhang X."/>
            <person name="Zhang W."/>
            <person name="Wang L."/>
            <person name="Ding C."/>
            <person name="Sheng H."/>
            <person name="Gu J."/>
            <person name="Chen S."/>
            <person name="Ni L."/>
            <person name="Zhu F."/>
            <person name="Chen W."/>
            <person name="Lan L."/>
            <person name="Lai Y."/>
            <person name="Cheng Z."/>
            <person name="Gu M."/>
            <person name="Jiang J."/>
            <person name="Li J."/>
            <person name="Hong G."/>
            <person name="Xue Y."/>
            <person name="Han B."/>
        </authorList>
    </citation>
    <scope>NUCLEOTIDE SEQUENCE [LARGE SCALE GENOMIC DNA]</scope>
    <source>
        <strain>cv. Guang-Lu-Ai No.4</strain>
    </source>
</reference>
<reference key="2">
    <citation type="journal article" date="2005" name="PLoS Biol.">
        <title>The genomes of Oryza sativa: a history of duplications.</title>
        <authorList>
            <person name="Yu J."/>
            <person name="Wang J."/>
            <person name="Lin W."/>
            <person name="Li S."/>
            <person name="Li H."/>
            <person name="Zhou J."/>
            <person name="Ni P."/>
            <person name="Dong W."/>
            <person name="Hu S."/>
            <person name="Zeng C."/>
            <person name="Zhang J."/>
            <person name="Zhang Y."/>
            <person name="Li R."/>
            <person name="Xu Z."/>
            <person name="Li S."/>
            <person name="Li X."/>
            <person name="Zheng H."/>
            <person name="Cong L."/>
            <person name="Lin L."/>
            <person name="Yin J."/>
            <person name="Geng J."/>
            <person name="Li G."/>
            <person name="Shi J."/>
            <person name="Liu J."/>
            <person name="Lv H."/>
            <person name="Li J."/>
            <person name="Wang J."/>
            <person name="Deng Y."/>
            <person name="Ran L."/>
            <person name="Shi X."/>
            <person name="Wang X."/>
            <person name="Wu Q."/>
            <person name="Li C."/>
            <person name="Ren X."/>
            <person name="Wang J."/>
            <person name="Wang X."/>
            <person name="Li D."/>
            <person name="Liu D."/>
            <person name="Zhang X."/>
            <person name="Ji Z."/>
            <person name="Zhao W."/>
            <person name="Sun Y."/>
            <person name="Zhang Z."/>
            <person name="Bao J."/>
            <person name="Han Y."/>
            <person name="Dong L."/>
            <person name="Ji J."/>
            <person name="Chen P."/>
            <person name="Wu S."/>
            <person name="Liu J."/>
            <person name="Xiao Y."/>
            <person name="Bu D."/>
            <person name="Tan J."/>
            <person name="Yang L."/>
            <person name="Ye C."/>
            <person name="Zhang J."/>
            <person name="Xu J."/>
            <person name="Zhou Y."/>
            <person name="Yu Y."/>
            <person name="Zhang B."/>
            <person name="Zhuang S."/>
            <person name="Wei H."/>
            <person name="Liu B."/>
            <person name="Lei M."/>
            <person name="Yu H."/>
            <person name="Li Y."/>
            <person name="Xu H."/>
            <person name="Wei S."/>
            <person name="He X."/>
            <person name="Fang L."/>
            <person name="Zhang Z."/>
            <person name="Zhang Y."/>
            <person name="Huang X."/>
            <person name="Su Z."/>
            <person name="Tong W."/>
            <person name="Li J."/>
            <person name="Tong Z."/>
            <person name="Li S."/>
            <person name="Ye J."/>
            <person name="Wang L."/>
            <person name="Fang L."/>
            <person name="Lei T."/>
            <person name="Chen C.-S."/>
            <person name="Chen H.-C."/>
            <person name="Xu Z."/>
            <person name="Li H."/>
            <person name="Huang H."/>
            <person name="Zhang F."/>
            <person name="Xu H."/>
            <person name="Li N."/>
            <person name="Zhao C."/>
            <person name="Li S."/>
            <person name="Dong L."/>
            <person name="Huang Y."/>
            <person name="Li L."/>
            <person name="Xi Y."/>
            <person name="Qi Q."/>
            <person name="Li W."/>
            <person name="Zhang B."/>
            <person name="Hu W."/>
            <person name="Zhang Y."/>
            <person name="Tian X."/>
            <person name="Jiao Y."/>
            <person name="Liang X."/>
            <person name="Jin J."/>
            <person name="Gao L."/>
            <person name="Zheng W."/>
            <person name="Hao B."/>
            <person name="Liu S.-M."/>
            <person name="Wang W."/>
            <person name="Yuan L."/>
            <person name="Cao M."/>
            <person name="McDermott J."/>
            <person name="Samudrala R."/>
            <person name="Wang J."/>
            <person name="Wong G.K.-S."/>
            <person name="Yang H."/>
        </authorList>
    </citation>
    <scope>NUCLEOTIDE SEQUENCE [LARGE SCALE GENOMIC DNA]</scope>
    <source>
        <strain>cv. 93-11</strain>
    </source>
</reference>
<sequence>MLQDIMNTKKIKLHDCHFGSPLCDPSPAPHLLSSAAAAGLSFHPGLVSSAAQHQQHGAGGWLHEEYYAPRSSPPSSLLAQTCVGSNATAFYAAENLPQFDFPALGTAAAAAAKAPFRSSESELYRPVDPLLLRADHSVRTYYVRPQKRDSGERTPLPPPSQQQHQDRIHGLFAGAPTTRLLSGEPKIHLFPPQVAAKPILPAMDAPSLQNQMENQLTRNCIGAATPVTPTGNLAGSGAPSKTRIRWTQDLHERFVDCVNQLGGADKATPKGILKLMNSDGLTIYHIKSHLQKYRIAKYMPASSEGKQLEKRATGNDMQNLDPKTGMQITEALRVQLDVQRRLHEQLEIQRNLQLRIEEQGKRLQKMFEDQLKASRSVMEPQELDDVVAFAAGDGDDDAFDDVDVQLLAVAGSGYDDAGFQSKIS</sequence>
<dbReference type="EMBL" id="CR855038">
    <property type="protein sequence ID" value="CAH65981.1"/>
    <property type="status" value="ALT_INIT"/>
    <property type="molecule type" value="Genomic_DNA"/>
</dbReference>
<dbReference type="EMBL" id="CM000129">
    <property type="protein sequence ID" value="EAY95949.1"/>
    <property type="status" value="ALT_INIT"/>
    <property type="molecule type" value="Genomic_DNA"/>
</dbReference>
<dbReference type="SMR" id="A2XYN9"/>
<dbReference type="STRING" id="39946.A2XYN9"/>
<dbReference type="EnsemblPlants" id="OsPr106_04g0030510.02">
    <property type="protein sequence ID" value="OsPr106_04g0030510.02"/>
    <property type="gene ID" value="OsPr106_04g0030510"/>
</dbReference>
<dbReference type="EnsemblPlants" id="OsZS97_04G030630_03">
    <property type="protein sequence ID" value="OsZS97_04G030630_03"/>
    <property type="gene ID" value="OsZS97_04G030630"/>
</dbReference>
<dbReference type="EnsemblPlants" id="OsZS97_04G030630_04">
    <property type="protein sequence ID" value="OsZS97_04G030630_04"/>
    <property type="gene ID" value="OsZS97_04G030630"/>
</dbReference>
<dbReference type="Gramene" id="OsPr106_04g0030510.02">
    <property type="protein sequence ID" value="OsPr106_04g0030510.02"/>
    <property type="gene ID" value="OsPr106_04g0030510"/>
</dbReference>
<dbReference type="Gramene" id="OsZS97_04G030630_03">
    <property type="protein sequence ID" value="OsZS97_04G030630_03"/>
    <property type="gene ID" value="OsZS97_04G030630"/>
</dbReference>
<dbReference type="Gramene" id="OsZS97_04G030630_04">
    <property type="protein sequence ID" value="OsZS97_04G030630_04"/>
    <property type="gene ID" value="OsZS97_04G030630"/>
</dbReference>
<dbReference type="HOGENOM" id="CLU_051939_1_0_1"/>
<dbReference type="Proteomes" id="UP000007015">
    <property type="component" value="Chromosome 4"/>
</dbReference>
<dbReference type="GO" id="GO:0005634">
    <property type="term" value="C:nucleus"/>
    <property type="evidence" value="ECO:0007669"/>
    <property type="project" value="UniProtKB-SubCell"/>
</dbReference>
<dbReference type="GO" id="GO:0003677">
    <property type="term" value="F:DNA binding"/>
    <property type="evidence" value="ECO:0007669"/>
    <property type="project" value="UniProtKB-KW"/>
</dbReference>
<dbReference type="GO" id="GO:0003700">
    <property type="term" value="F:DNA-binding transcription factor activity"/>
    <property type="evidence" value="ECO:0007669"/>
    <property type="project" value="InterPro"/>
</dbReference>
<dbReference type="GO" id="GO:0016132">
    <property type="term" value="P:brassinosteroid biosynthetic process"/>
    <property type="evidence" value="ECO:0007669"/>
    <property type="project" value="UniProtKB-KW"/>
</dbReference>
<dbReference type="GO" id="GO:0009742">
    <property type="term" value="P:brassinosteroid mediated signaling pathway"/>
    <property type="evidence" value="ECO:0007669"/>
    <property type="project" value="UniProtKB-KW"/>
</dbReference>
<dbReference type="FunFam" id="1.10.10.60:FF:000002">
    <property type="entry name" value="Myb family transcription factor"/>
    <property type="match status" value="1"/>
</dbReference>
<dbReference type="Gene3D" id="1.10.10.60">
    <property type="entry name" value="Homeodomain-like"/>
    <property type="match status" value="1"/>
</dbReference>
<dbReference type="InterPro" id="IPR009057">
    <property type="entry name" value="Homeodomain-like_sf"/>
</dbReference>
<dbReference type="InterPro" id="IPR025756">
    <property type="entry name" value="Myb_CC_LHEQLE"/>
</dbReference>
<dbReference type="InterPro" id="IPR017930">
    <property type="entry name" value="Myb_dom"/>
</dbReference>
<dbReference type="InterPro" id="IPR006447">
    <property type="entry name" value="Myb_dom_plants"/>
</dbReference>
<dbReference type="InterPro" id="IPR046955">
    <property type="entry name" value="PHR1-like"/>
</dbReference>
<dbReference type="InterPro" id="IPR001005">
    <property type="entry name" value="SANT/Myb"/>
</dbReference>
<dbReference type="NCBIfam" id="TIGR01557">
    <property type="entry name" value="myb_SHAQKYF"/>
    <property type="match status" value="1"/>
</dbReference>
<dbReference type="PANTHER" id="PTHR31499:SF80">
    <property type="entry name" value="HTH MYB-TYPE DOMAIN-CONTAINING PROTEIN"/>
    <property type="match status" value="1"/>
</dbReference>
<dbReference type="PANTHER" id="PTHR31499">
    <property type="entry name" value="MYB FAMILY TRANSCRIPTION FACTOR PHL11"/>
    <property type="match status" value="1"/>
</dbReference>
<dbReference type="Pfam" id="PF14379">
    <property type="entry name" value="Myb_CC_LHEQLE"/>
    <property type="match status" value="1"/>
</dbReference>
<dbReference type="Pfam" id="PF00249">
    <property type="entry name" value="Myb_DNA-binding"/>
    <property type="match status" value="1"/>
</dbReference>
<dbReference type="SUPFAM" id="SSF46689">
    <property type="entry name" value="Homeodomain-like"/>
    <property type="match status" value="1"/>
</dbReference>
<dbReference type="PROSITE" id="PS51294">
    <property type="entry name" value="HTH_MYB"/>
    <property type="match status" value="1"/>
</dbReference>
<gene>
    <name evidence="1" type="primary">RLI1</name>
    <name evidence="1" type="synonym">HINGE1</name>
    <name evidence="6" type="ORF">H1005F08.10</name>
    <name evidence="7" type="ORF">OsI_17820</name>
</gene>
<feature type="chain" id="PRO_0000456865" description="Myb family transcription factor RLI1">
    <location>
        <begin position="1"/>
        <end position="424"/>
    </location>
</feature>
<feature type="domain" description="HTH myb-type" evidence="3">
    <location>
        <begin position="238"/>
        <end position="298"/>
    </location>
</feature>
<feature type="DNA-binding region" description="H-T-H motif" evidence="3">
    <location>
        <begin position="269"/>
        <end position="294"/>
    </location>
</feature>
<feature type="region of interest" description="Disordered" evidence="4">
    <location>
        <begin position="144"/>
        <end position="165"/>
    </location>
</feature>
<feature type="coiled-coil region" evidence="2">
    <location>
        <begin position="342"/>
        <end position="391"/>
    </location>
</feature>
<feature type="short sequence motif" description="LHEQLE" evidence="5">
    <location>
        <begin position="342"/>
        <end position="347"/>
    </location>
</feature>
<comment type="function">
    <text evidence="1">Transcription factor binding to specific DNA sequences of target genes promoters, such as the motif R1BS 5'-NAKATNCN-3' and the motif P1BS 5'-GNATATNC-3' to trigger their expression (By similarity). Nitrate-induced component involved in modulating phosphate (Pi) response and homeostasis together with PHR2; activates directly the expression of Pi starvation-induced (PSI) genes upon nitrate disponibility, thus triggering the nitrate-induced phosphate response (NIPR) promoting Pi uptake activity (By similarity). Involved in the shoot architecture; positively regulates leaf inclination by affecting lamina joint cell elongation via the direct promotion of ILI4/BU1 and BC1 genes expression, especially in response to phosphate (Pi) availability (By similarity). Regulates both brassinolide (BL) biosynthesis and signaling by directly activating BL-biosynthesis and signaling genes (By similarity).</text>
</comment>
<comment type="subunit">
    <text evidence="1">Homodimer (By similarity). Interacts with PHR2 in the nucleus (By similarity). Interacts with SPX1 and SPX2 in the nucleus; these interactions prevent binding to the promoters of target genes, thus regulating negatively leaf inclination in response to phosphate (Pi) starvation (By similarity).</text>
</comment>
<comment type="subcellular location">
    <subcellularLocation>
        <location evidence="3">Nucleus</location>
    </subcellularLocation>
</comment>
<comment type="similarity">
    <text evidence="5">Belongs to the MYB-CC family.</text>
</comment>
<comment type="sequence caution" evidence="5">
    <conflict type="erroneous initiation">
        <sequence resource="EMBL-CDS" id="CAH65981"/>
    </conflict>
    <text>Truncated N-terminus.</text>
</comment>
<comment type="sequence caution" evidence="5">
    <conflict type="erroneous initiation">
        <sequence resource="EMBL-CDS" id="EAY95949"/>
    </conflict>
    <text>Truncated N-terminus.</text>
</comment>
<evidence type="ECO:0000250" key="1">
    <source>
        <dbReference type="UniProtKB" id="A0A345FZ89"/>
    </source>
</evidence>
<evidence type="ECO:0000255" key="2"/>
<evidence type="ECO:0000255" key="3">
    <source>
        <dbReference type="PROSITE-ProRule" id="PRU00625"/>
    </source>
</evidence>
<evidence type="ECO:0000256" key="4">
    <source>
        <dbReference type="SAM" id="MobiDB-lite"/>
    </source>
</evidence>
<evidence type="ECO:0000305" key="5"/>
<evidence type="ECO:0000312" key="6">
    <source>
        <dbReference type="EMBL" id="CAH65981.1"/>
    </source>
</evidence>
<evidence type="ECO:0000312" key="7">
    <source>
        <dbReference type="EMBL" id="EAY95949.1"/>
    </source>
</evidence>